<proteinExistence type="inferred from homology"/>
<protein>
    <recommendedName>
        <fullName evidence="1">Ribose-5-phosphate isomerase A</fullName>
        <ecNumber evidence="1">5.3.1.6</ecNumber>
    </recommendedName>
    <alternativeName>
        <fullName evidence="1">Phosphoriboisomerase A</fullName>
        <shortName evidence="1">PRI</shortName>
    </alternativeName>
</protein>
<reference key="1">
    <citation type="journal article" date="2011" name="J. Bacteriol.">
        <title>Complete genome sequence of the plant growth-promoting endophyte Burkholderia phytofirmans strain PsJN.</title>
        <authorList>
            <person name="Weilharter A."/>
            <person name="Mitter B."/>
            <person name="Shin M.V."/>
            <person name="Chain P.S."/>
            <person name="Nowak J."/>
            <person name="Sessitsch A."/>
        </authorList>
    </citation>
    <scope>NUCLEOTIDE SEQUENCE [LARGE SCALE GENOMIC DNA]</scope>
    <source>
        <strain>DSM 17436 / LMG 22146 / PsJN</strain>
    </source>
</reference>
<comment type="function">
    <text evidence="1">Catalyzes the reversible conversion of ribose-5-phosphate to ribulose 5-phosphate.</text>
</comment>
<comment type="catalytic activity">
    <reaction evidence="1">
        <text>aldehydo-D-ribose 5-phosphate = D-ribulose 5-phosphate</text>
        <dbReference type="Rhea" id="RHEA:14657"/>
        <dbReference type="ChEBI" id="CHEBI:58121"/>
        <dbReference type="ChEBI" id="CHEBI:58273"/>
        <dbReference type="EC" id="5.3.1.6"/>
    </reaction>
</comment>
<comment type="pathway">
    <text evidence="1">Carbohydrate degradation; pentose phosphate pathway; D-ribose 5-phosphate from D-ribulose 5-phosphate (non-oxidative stage): step 1/1.</text>
</comment>
<comment type="subunit">
    <text evidence="1">Homodimer.</text>
</comment>
<comment type="similarity">
    <text evidence="1">Belongs to the ribose 5-phosphate isomerase family.</text>
</comment>
<feature type="chain" id="PRO_1000097654" description="Ribose-5-phosphate isomerase A">
    <location>
        <begin position="1"/>
        <end position="231"/>
    </location>
</feature>
<feature type="active site" description="Proton acceptor" evidence="1">
    <location>
        <position position="107"/>
    </location>
</feature>
<feature type="binding site" evidence="1">
    <location>
        <begin position="32"/>
        <end position="35"/>
    </location>
    <ligand>
        <name>substrate</name>
    </ligand>
</feature>
<feature type="binding site" evidence="1">
    <location>
        <begin position="85"/>
        <end position="88"/>
    </location>
    <ligand>
        <name>substrate</name>
    </ligand>
</feature>
<feature type="binding site" evidence="1">
    <location>
        <begin position="98"/>
        <end position="101"/>
    </location>
    <ligand>
        <name>substrate</name>
    </ligand>
</feature>
<feature type="binding site" evidence="1">
    <location>
        <position position="125"/>
    </location>
    <ligand>
        <name>substrate</name>
    </ligand>
</feature>
<sequence length="231" mass="24026">MTQDELKQLVGQAAADYVNATVPEGAVIGVGTGSTANCFIDALAGNKARYRGAVSSSLATTARLQTHGIKVFDLNEIDSLPVYVDGADEIDRSGAMIKGGGGALTREKIVASVSDVFVCIADASKLVETLGTFPLPIEVVPMARTAIGRRVTALGGVPVVRVTKEGVPFITDNGNEIIDVKGLRISDPRTLETHINAWPGVVTVGLFAARGANLCLLGTDTGVETIEYSKG</sequence>
<name>RPIA_PARPJ</name>
<gene>
    <name evidence="1" type="primary">rpiA</name>
    <name type="ordered locus">Bphyt_1709</name>
</gene>
<keyword id="KW-0413">Isomerase</keyword>
<evidence type="ECO:0000255" key="1">
    <source>
        <dbReference type="HAMAP-Rule" id="MF_00170"/>
    </source>
</evidence>
<organism>
    <name type="scientific">Paraburkholderia phytofirmans (strain DSM 17436 / LMG 22146 / PsJN)</name>
    <name type="common">Burkholderia phytofirmans</name>
    <dbReference type="NCBI Taxonomy" id="398527"/>
    <lineage>
        <taxon>Bacteria</taxon>
        <taxon>Pseudomonadati</taxon>
        <taxon>Pseudomonadota</taxon>
        <taxon>Betaproteobacteria</taxon>
        <taxon>Burkholderiales</taxon>
        <taxon>Burkholderiaceae</taxon>
        <taxon>Paraburkholderia</taxon>
    </lineage>
</organism>
<dbReference type="EC" id="5.3.1.6" evidence="1"/>
<dbReference type="EMBL" id="CP001052">
    <property type="protein sequence ID" value="ACD16117.1"/>
    <property type="molecule type" value="Genomic_DNA"/>
</dbReference>
<dbReference type="RefSeq" id="WP_012432727.1">
    <property type="nucleotide sequence ID" value="NC_010681.1"/>
</dbReference>
<dbReference type="SMR" id="B2T3F4"/>
<dbReference type="STRING" id="398527.Bphyt_1709"/>
<dbReference type="KEGG" id="bpy:Bphyt_1709"/>
<dbReference type="eggNOG" id="COG0120">
    <property type="taxonomic scope" value="Bacteria"/>
</dbReference>
<dbReference type="HOGENOM" id="CLU_056590_1_1_4"/>
<dbReference type="OrthoDB" id="5870696at2"/>
<dbReference type="UniPathway" id="UPA00115">
    <property type="reaction ID" value="UER00412"/>
</dbReference>
<dbReference type="Proteomes" id="UP000001739">
    <property type="component" value="Chromosome 1"/>
</dbReference>
<dbReference type="GO" id="GO:0005829">
    <property type="term" value="C:cytosol"/>
    <property type="evidence" value="ECO:0007669"/>
    <property type="project" value="TreeGrafter"/>
</dbReference>
<dbReference type="GO" id="GO:0004751">
    <property type="term" value="F:ribose-5-phosphate isomerase activity"/>
    <property type="evidence" value="ECO:0007669"/>
    <property type="project" value="UniProtKB-UniRule"/>
</dbReference>
<dbReference type="GO" id="GO:0006014">
    <property type="term" value="P:D-ribose metabolic process"/>
    <property type="evidence" value="ECO:0007669"/>
    <property type="project" value="TreeGrafter"/>
</dbReference>
<dbReference type="GO" id="GO:0009052">
    <property type="term" value="P:pentose-phosphate shunt, non-oxidative branch"/>
    <property type="evidence" value="ECO:0007669"/>
    <property type="project" value="UniProtKB-UniRule"/>
</dbReference>
<dbReference type="CDD" id="cd01398">
    <property type="entry name" value="RPI_A"/>
    <property type="match status" value="1"/>
</dbReference>
<dbReference type="FunFam" id="3.40.50.1360:FF:000001">
    <property type="entry name" value="Ribose-5-phosphate isomerase A"/>
    <property type="match status" value="1"/>
</dbReference>
<dbReference type="Gene3D" id="3.30.70.260">
    <property type="match status" value="1"/>
</dbReference>
<dbReference type="Gene3D" id="3.40.50.1360">
    <property type="match status" value="1"/>
</dbReference>
<dbReference type="HAMAP" id="MF_00170">
    <property type="entry name" value="Rib_5P_isom_A"/>
    <property type="match status" value="1"/>
</dbReference>
<dbReference type="InterPro" id="IPR037171">
    <property type="entry name" value="NagB/RpiA_transferase-like"/>
</dbReference>
<dbReference type="InterPro" id="IPR020672">
    <property type="entry name" value="Ribose5P_isomerase_typA_subgr"/>
</dbReference>
<dbReference type="InterPro" id="IPR004788">
    <property type="entry name" value="Ribose5P_isomerase_type_A"/>
</dbReference>
<dbReference type="NCBIfam" id="NF001924">
    <property type="entry name" value="PRK00702.1"/>
    <property type="match status" value="1"/>
</dbReference>
<dbReference type="NCBIfam" id="TIGR00021">
    <property type="entry name" value="rpiA"/>
    <property type="match status" value="1"/>
</dbReference>
<dbReference type="PANTHER" id="PTHR11934">
    <property type="entry name" value="RIBOSE-5-PHOSPHATE ISOMERASE"/>
    <property type="match status" value="1"/>
</dbReference>
<dbReference type="PANTHER" id="PTHR11934:SF0">
    <property type="entry name" value="RIBOSE-5-PHOSPHATE ISOMERASE"/>
    <property type="match status" value="1"/>
</dbReference>
<dbReference type="Pfam" id="PF06026">
    <property type="entry name" value="Rib_5-P_isom_A"/>
    <property type="match status" value="1"/>
</dbReference>
<dbReference type="SUPFAM" id="SSF75445">
    <property type="entry name" value="D-ribose-5-phosphate isomerase (RpiA), lid domain"/>
    <property type="match status" value="1"/>
</dbReference>
<dbReference type="SUPFAM" id="SSF100950">
    <property type="entry name" value="NagB/RpiA/CoA transferase-like"/>
    <property type="match status" value="1"/>
</dbReference>
<accession>B2T3F4</accession>